<organism>
    <name type="scientific">African swine fever virus (isolate Tick/Malawi/Lil 20-1/1983)</name>
    <name type="common">ASFV</name>
    <dbReference type="NCBI Taxonomy" id="10500"/>
    <lineage>
        <taxon>Viruses</taxon>
        <taxon>Varidnaviria</taxon>
        <taxon>Bamfordvirae</taxon>
        <taxon>Nucleocytoviricota</taxon>
        <taxon>Pokkesviricetes</taxon>
        <taxon>Asfuvirales</taxon>
        <taxon>Asfarviridae</taxon>
        <taxon>Asfivirus</taxon>
        <taxon>African swine fever virus</taxon>
    </lineage>
</organism>
<accession>P0C9R1</accession>
<organismHost>
    <name type="scientific">Ornithodoros</name>
    <name type="common">relapsing fever ticks</name>
    <dbReference type="NCBI Taxonomy" id="6937"/>
</organismHost>
<organismHost>
    <name type="scientific">Phacochoerus aethiopicus</name>
    <name type="common">Warthog</name>
    <dbReference type="NCBI Taxonomy" id="85517"/>
</organismHost>
<organismHost>
    <name type="scientific">Phacochoerus africanus</name>
    <name type="common">Warthog</name>
    <dbReference type="NCBI Taxonomy" id="41426"/>
</organismHost>
<organismHost>
    <name type="scientific">Potamochoerus larvatus</name>
    <name type="common">Bushpig</name>
    <dbReference type="NCBI Taxonomy" id="273792"/>
</organismHost>
<organismHost>
    <name type="scientific">Sus scrofa</name>
    <name type="common">Pig</name>
    <dbReference type="NCBI Taxonomy" id="9823"/>
</organismHost>
<dbReference type="EMBL" id="AY261361">
    <property type="status" value="NOT_ANNOTATED_CDS"/>
    <property type="molecule type" value="Genomic_DNA"/>
</dbReference>
<dbReference type="Proteomes" id="UP000000860">
    <property type="component" value="Segment"/>
</dbReference>
<dbReference type="SUPFAM" id="SSF140860">
    <property type="entry name" value="Pseudo ankyrin repeat-like"/>
    <property type="match status" value="1"/>
</dbReference>
<gene>
    <name type="ordered locus">Mal-046</name>
</gene>
<proteinExistence type="inferred from homology"/>
<name>36015_ASFM2</name>
<keyword id="KW-0244">Early protein</keyword>
<evidence type="ECO:0000250" key="1">
    <source>
        <dbReference type="UniProtKB" id="Q65141"/>
    </source>
</evidence>
<evidence type="ECO:0000305" key="2"/>
<reference key="1">
    <citation type="submission" date="2003-03" db="EMBL/GenBank/DDBJ databases">
        <title>African swine fever virus genomes.</title>
        <authorList>
            <person name="Kutish G.F."/>
            <person name="Rock D.L."/>
        </authorList>
    </citation>
    <scope>NUCLEOTIDE SEQUENCE [LARGE SCALE GENOMIC DNA]</scope>
</reference>
<comment type="function">
    <text evidence="1">Plays a role in virus cell tropism, and may be required for efficient virus replication in macrophages.</text>
</comment>
<comment type="induction">
    <text evidence="2">Expressed in the early phase of the viral replicative cycle.</text>
</comment>
<comment type="similarity">
    <text evidence="2">Belongs to the asfivirus MGF 360 family.</text>
</comment>
<feature type="chain" id="PRO_0000373296" description="Protein MGF 360-15R">
    <location>
        <begin position="1"/>
        <end position="271"/>
    </location>
</feature>
<sequence length="271" mass="30984">MVLVEFLTGFSYLYGKKLFSVSKIMDMICLDYYTIIPAPLAMMLAARVKNYDLMKRLHEWDISIDYALLVVDDVPTIDYCLSLGARSPTRAQKRQLLGDNTFSPVYKYLMNCSGFPTKREKNIPSDVQCERLQKIIIKELIFNCSVLLEMVLLTEREYAYALHYAAKYNQMPILMYCWQQSTDSESVLLKTCCSDKNINCFNHCILYGGAQNFDAAMVEAAKHDARLLINYCVMLGGRSLNEARETAAAFGHLECAQHCLRLQSYIVDDTD</sequence>
<protein>
    <recommendedName>
        <fullName>Protein MGF 360-15R</fullName>
    </recommendedName>
</protein>